<reference key="1">
    <citation type="submission" date="1996-12" db="EMBL/GenBank/DDBJ databases">
        <title>Cloning and characterization of the homogentisate 1,2-dioxygenase gene in A. thaliana and C. elegans.</title>
        <authorList>
            <person name="Schmidt S.R."/>
            <person name="Werner E."/>
            <person name="Mueller C.R."/>
            <person name="Kress W."/>
        </authorList>
    </citation>
    <scope>NUCLEOTIDE SEQUENCE [GENOMIC DNA]</scope>
    <source>
        <strain>Bristol N2</strain>
    </source>
</reference>
<reference key="2">
    <citation type="submission" date="1999-03" db="EMBL/GenBank/DDBJ databases">
        <title>Sequence homology of HGO genes in eukaryotic organisms.</title>
        <authorList>
            <person name="Schmidt S.R."/>
            <person name="Werner E."/>
            <person name="Mueller C.R."/>
            <person name="Kress W."/>
        </authorList>
    </citation>
    <scope>NUCLEOTIDE SEQUENCE [MRNA]</scope>
    <source>
        <strain>Bristol N2</strain>
        <tissue>Embryo</tissue>
    </source>
</reference>
<reference key="3">
    <citation type="journal article" date="1998" name="Science">
        <title>Genome sequence of the nematode C. elegans: a platform for investigating biology.</title>
        <authorList>
            <consortium name="The C. elegans sequencing consortium"/>
        </authorList>
    </citation>
    <scope>NUCLEOTIDE SEQUENCE [LARGE SCALE GENOMIC DNA]</scope>
    <source>
        <strain>Bristol N2</strain>
    </source>
</reference>
<reference key="4">
    <citation type="journal article" date="2008" name="J. Biol. Chem.">
        <title>The Caenorhabditis elegans K10C2.4 gene encodes a member of the fumarylacetoacetate hydrolase family: a Caenorhabditis elegans model of type I tyrosinemia.</title>
        <authorList>
            <person name="Fisher A.L."/>
            <person name="Page K.E."/>
            <person name="Lithgow G.J."/>
            <person name="Nash L."/>
        </authorList>
    </citation>
    <scope>FUNCTION</scope>
    <scope>TISSUE SPECIFICITY</scope>
    <scope>DISRUPTION PHENOTYPE</scope>
    <scope>MUTAGENESIS OF GLY-173</scope>
</reference>
<accession>Q9Y041</accession>
<accession>O62087</accession>
<accession>Q9NJP3</accession>
<comment type="function">
    <text evidence="5">Plays a role in the tyrosine degradation pathway.</text>
</comment>
<comment type="catalytic activity">
    <reaction>
        <text>homogentisate + O2 = 4-maleylacetoacetate + H(+)</text>
        <dbReference type="Rhea" id="RHEA:15449"/>
        <dbReference type="ChEBI" id="CHEBI:15378"/>
        <dbReference type="ChEBI" id="CHEBI:15379"/>
        <dbReference type="ChEBI" id="CHEBI:16169"/>
        <dbReference type="ChEBI" id="CHEBI:17105"/>
        <dbReference type="EC" id="1.13.11.5"/>
    </reaction>
</comment>
<comment type="cofactor">
    <cofactor>
        <name>Fe cation</name>
        <dbReference type="ChEBI" id="CHEBI:24875"/>
    </cofactor>
</comment>
<comment type="pathway">
    <text>Amino-acid degradation; L-phenylalanine degradation; acetoacetate and fumarate from L-phenylalanine: step 4/6.</text>
</comment>
<comment type="tissue specificity">
    <text evidence="3">Expressed in the hypodermis and intestine.</text>
</comment>
<comment type="disruption phenotype">
    <text evidence="3">RNAi-mediated knockdown together with fah-1 RNAi rescues the impaired growth and fertility defects in the single fah-1 RNAi mutant.</text>
</comment>
<comment type="similarity">
    <text evidence="4">Belongs to the homogentisate dioxygenase family.</text>
</comment>
<organism>
    <name type="scientific">Caenorhabditis elegans</name>
    <dbReference type="NCBI Taxonomy" id="6239"/>
    <lineage>
        <taxon>Eukaryota</taxon>
        <taxon>Metazoa</taxon>
        <taxon>Ecdysozoa</taxon>
        <taxon>Nematoda</taxon>
        <taxon>Chromadorea</taxon>
        <taxon>Rhabditida</taxon>
        <taxon>Rhabditina</taxon>
        <taxon>Rhabditomorpha</taxon>
        <taxon>Rhabditoidea</taxon>
        <taxon>Rhabditidae</taxon>
        <taxon>Peloderinae</taxon>
        <taxon>Caenorhabditis</taxon>
    </lineage>
</organism>
<protein>
    <recommendedName>
        <fullName>Homogentisate 1,2-dioxygenase</fullName>
        <ecNumber>1.13.11.5</ecNumber>
    </recommendedName>
    <alternativeName>
        <fullName>Homogentisate oxygenase</fullName>
    </alternativeName>
    <alternativeName>
        <fullName>Homogentisic acid oxidase</fullName>
    </alternativeName>
    <alternativeName>
        <fullName>Homogentisicase</fullName>
    </alternativeName>
</protein>
<name>HGD_CAEEL</name>
<proteinExistence type="evidence at protein level"/>
<evidence type="ECO:0000250" key="1"/>
<evidence type="ECO:0000256" key="2">
    <source>
        <dbReference type="SAM" id="MobiDB-lite"/>
    </source>
</evidence>
<evidence type="ECO:0000269" key="3">
    <source>
    </source>
</evidence>
<evidence type="ECO:0000305" key="4"/>
<evidence type="ECO:0000305" key="5">
    <source>
    </source>
</evidence>
<evidence type="ECO:0000312" key="6">
    <source>
        <dbReference type="WormBase" id="W06D4.1"/>
    </source>
</evidence>
<feature type="chain" id="PRO_0000220243" description="Homogentisate 1,2-dioxygenase">
    <location>
        <begin position="1"/>
        <end position="437"/>
    </location>
</feature>
<feature type="region of interest" description="Disordered" evidence="2">
    <location>
        <begin position="15"/>
        <end position="34"/>
    </location>
</feature>
<feature type="binding site" evidence="1">
    <location>
        <position position="336"/>
    </location>
    <ligand>
        <name>Fe cation</name>
        <dbReference type="ChEBI" id="CHEBI:24875"/>
    </ligand>
</feature>
<feature type="binding site" evidence="1">
    <location>
        <position position="342"/>
    </location>
    <ligand>
        <name>Fe cation</name>
        <dbReference type="ChEBI" id="CHEBI:24875"/>
    </ligand>
</feature>
<feature type="binding site" evidence="1">
    <location>
        <position position="372"/>
    </location>
    <ligand>
        <name>Fe cation</name>
        <dbReference type="ChEBI" id="CHEBI:24875"/>
    </ligand>
</feature>
<feature type="mutagenesis site" description="Suppresses fah-1 RNAi-mediated toxicity." evidence="3">
    <original>G</original>
    <variation>R</variation>
    <location>
        <position position="173"/>
    </location>
</feature>
<feature type="sequence conflict" description="In Ref. 2; AAD00776." evidence="4" ref="2">
    <original>D</original>
    <variation>N</variation>
    <location>
        <position position="156"/>
    </location>
</feature>
<feature type="sequence conflict" description="In Ref. 2; AAD00776." evidence="4" ref="2">
    <original>L</original>
    <variation>P</variation>
    <location>
        <position position="176"/>
    </location>
</feature>
<feature type="sequence conflict" description="In Ref. 2; AAD00776." evidence="4" ref="2">
    <original>V</original>
    <variation>G</variation>
    <location>
        <position position="193"/>
    </location>
</feature>
<feature type="sequence conflict" description="In Ref. 2; AAD00776." evidence="4" ref="2">
    <original>V</original>
    <variation>G</variation>
    <location>
        <position position="242"/>
    </location>
</feature>
<feature type="sequence conflict" description="In Ref. 2; AAD00776." evidence="4" ref="2">
    <original>D</original>
    <variation>E</variation>
    <location>
        <position position="265"/>
    </location>
</feature>
<feature type="sequence conflict" description="In Ref. 2; AAD00776." evidence="4" ref="2">
    <original>F</original>
    <variation>Y</variation>
    <location>
        <position position="433"/>
    </location>
</feature>
<keyword id="KW-0223">Dioxygenase</keyword>
<keyword id="KW-0408">Iron</keyword>
<keyword id="KW-0479">Metal-binding</keyword>
<keyword id="KW-0560">Oxidoreductase</keyword>
<keyword id="KW-0585">Phenylalanine catabolism</keyword>
<keyword id="KW-1185">Reference proteome</keyword>
<keyword id="KW-0828">Tyrosine catabolism</keyword>
<sequence length="437" mass="49239">MSEFDELKYLTGFGNEHATSDPRVPDALPVGQNSPQKCSHGLYAEQLSGTAFTAPRSQNQRSWLYRIRPSVIHRPFEAMKENDQHWTNNFSSIPPNPNQYRWNPFPLPTKEGVTFVDNLYTVCGGGDVISRTGLAIHQFSCNASMEHTAMYNSDGDFLIVPQQGALEITTEFGRLLVNPQEIAVIPQGIRFSVAVRGPSRGYILEVYGTHFQLPDLGPIGANGLANPRDFEAPVAWFEDLDVEFTIINKYQGSWFQAKQGHSPFDVVGWHGNYVPYKYDLKKFMVINTVSFDHCDPSIFTVLTAPSVKHGTAIADFVIFPPRWGCADNTFRPPYYHRNCMSEYMGLITGCYEAKEGGFKPGGGSLHSMMTPHGPDFNCFEMASNADLKPQRVAEGTMSFMFESSLNMAITNWAVYQNVDKDYYKDWQPLKKHFTMPK</sequence>
<gene>
    <name evidence="6" type="primary">hgo-1</name>
    <name evidence="6" type="ORF">W06D4.1</name>
</gene>
<dbReference type="EC" id="1.13.11.5"/>
<dbReference type="EMBL" id="AF136150">
    <property type="protein sequence ID" value="AAF61419.1"/>
    <property type="molecule type" value="Genomic_DNA"/>
</dbReference>
<dbReference type="EMBL" id="U95181">
    <property type="protein sequence ID" value="AAD00776.1"/>
    <property type="molecule type" value="mRNA"/>
</dbReference>
<dbReference type="EMBL" id="BX284601">
    <property type="protein sequence ID" value="CAA22255.4"/>
    <property type="molecule type" value="Genomic_DNA"/>
</dbReference>
<dbReference type="EMBL" id="Z93778">
    <property type="protein sequence ID" value="CAA22255.4"/>
    <property type="status" value="JOINED"/>
    <property type="molecule type" value="Genomic_DNA"/>
</dbReference>
<dbReference type="PIR" id="T19626">
    <property type="entry name" value="T19626"/>
</dbReference>
<dbReference type="PIR" id="T37469">
    <property type="entry name" value="T37469"/>
</dbReference>
<dbReference type="RefSeq" id="NP_492433.1">
    <property type="nucleotide sequence ID" value="NM_060032.7"/>
</dbReference>
<dbReference type="SMR" id="Q9Y041"/>
<dbReference type="BioGRID" id="38158">
    <property type="interactions" value="6"/>
</dbReference>
<dbReference type="FunCoup" id="Q9Y041">
    <property type="interactions" value="163"/>
</dbReference>
<dbReference type="STRING" id="6239.W06D4.1.1"/>
<dbReference type="iPTMnet" id="Q9Y041"/>
<dbReference type="PaxDb" id="6239-W06D4.1"/>
<dbReference type="PeptideAtlas" id="Q9Y041"/>
<dbReference type="EnsemblMetazoa" id="W06D4.1.1">
    <property type="protein sequence ID" value="W06D4.1.1"/>
    <property type="gene ID" value="WBGene00001843"/>
</dbReference>
<dbReference type="GeneID" id="172726"/>
<dbReference type="KEGG" id="cel:CELE_W06D4.1"/>
<dbReference type="UCSC" id="W06D4.1">
    <property type="organism name" value="c. elegans"/>
</dbReference>
<dbReference type="AGR" id="WB:WBGene00001843"/>
<dbReference type="CTD" id="172726"/>
<dbReference type="WormBase" id="W06D4.1">
    <property type="protein sequence ID" value="CE29602"/>
    <property type="gene ID" value="WBGene00001843"/>
    <property type="gene designation" value="hgo-1"/>
</dbReference>
<dbReference type="eggNOG" id="KOG1417">
    <property type="taxonomic scope" value="Eukaryota"/>
</dbReference>
<dbReference type="GeneTree" id="ENSGT00390000004601"/>
<dbReference type="HOGENOM" id="CLU_027174_0_0_1"/>
<dbReference type="InParanoid" id="Q9Y041"/>
<dbReference type="OMA" id="MLPHGPD"/>
<dbReference type="OrthoDB" id="1689029at2759"/>
<dbReference type="PhylomeDB" id="Q9Y041"/>
<dbReference type="Reactome" id="R-CEL-8963684">
    <property type="pathway name" value="Tyrosine catabolism"/>
</dbReference>
<dbReference type="UniPathway" id="UPA00139">
    <property type="reaction ID" value="UER00339"/>
</dbReference>
<dbReference type="PRO" id="PR:Q9Y041"/>
<dbReference type="Proteomes" id="UP000001940">
    <property type="component" value="Chromosome I"/>
</dbReference>
<dbReference type="Bgee" id="WBGene00001843">
    <property type="expression patterns" value="Expressed in material anatomical entity and 5 other cell types or tissues"/>
</dbReference>
<dbReference type="GO" id="GO:0005737">
    <property type="term" value="C:cytoplasm"/>
    <property type="evidence" value="ECO:0007005"/>
    <property type="project" value="WormBase"/>
</dbReference>
<dbReference type="GO" id="GO:0055120">
    <property type="term" value="C:striated muscle dense body"/>
    <property type="evidence" value="ECO:0007005"/>
    <property type="project" value="WormBase"/>
</dbReference>
<dbReference type="GO" id="GO:0004411">
    <property type="term" value="F:homogentisate 1,2-dioxygenase activity"/>
    <property type="evidence" value="ECO:0000318"/>
    <property type="project" value="GO_Central"/>
</dbReference>
<dbReference type="GO" id="GO:0046872">
    <property type="term" value="F:metal ion binding"/>
    <property type="evidence" value="ECO:0007669"/>
    <property type="project" value="UniProtKB-KW"/>
</dbReference>
<dbReference type="GO" id="GO:0006559">
    <property type="term" value="P:L-phenylalanine catabolic process"/>
    <property type="evidence" value="ECO:0000318"/>
    <property type="project" value="GO_Central"/>
</dbReference>
<dbReference type="GO" id="GO:0006572">
    <property type="term" value="P:tyrosine catabolic process"/>
    <property type="evidence" value="ECO:0007669"/>
    <property type="project" value="UniProtKB-KW"/>
</dbReference>
<dbReference type="CDD" id="cd07000">
    <property type="entry name" value="cupin_HGO_N"/>
    <property type="match status" value="1"/>
</dbReference>
<dbReference type="FunFam" id="2.60.120.10:FF:000026">
    <property type="entry name" value="Homogentisate 1,2-dioxygenase"/>
    <property type="match status" value="1"/>
</dbReference>
<dbReference type="Gene3D" id="2.60.120.10">
    <property type="entry name" value="Jelly Rolls"/>
    <property type="match status" value="1"/>
</dbReference>
<dbReference type="InterPro" id="IPR046451">
    <property type="entry name" value="HgmA_C"/>
</dbReference>
<dbReference type="InterPro" id="IPR046452">
    <property type="entry name" value="HgmA_N"/>
</dbReference>
<dbReference type="InterPro" id="IPR005708">
    <property type="entry name" value="Homogentis_dOase"/>
</dbReference>
<dbReference type="InterPro" id="IPR014710">
    <property type="entry name" value="RmlC-like_jellyroll"/>
</dbReference>
<dbReference type="InterPro" id="IPR011051">
    <property type="entry name" value="RmlC_Cupin_sf"/>
</dbReference>
<dbReference type="NCBIfam" id="TIGR01015">
    <property type="entry name" value="hmgA"/>
    <property type="match status" value="1"/>
</dbReference>
<dbReference type="PANTHER" id="PTHR11056">
    <property type="entry name" value="HOMOGENTISATE 1,2-DIOXYGENASE"/>
    <property type="match status" value="1"/>
</dbReference>
<dbReference type="PANTHER" id="PTHR11056:SF0">
    <property type="entry name" value="HOMOGENTISATE 1,2-DIOXYGENASE"/>
    <property type="match status" value="1"/>
</dbReference>
<dbReference type="Pfam" id="PF04209">
    <property type="entry name" value="HgmA_C"/>
    <property type="match status" value="1"/>
</dbReference>
<dbReference type="Pfam" id="PF20510">
    <property type="entry name" value="HgmA_N"/>
    <property type="match status" value="1"/>
</dbReference>
<dbReference type="SUPFAM" id="SSF51182">
    <property type="entry name" value="RmlC-like cupins"/>
    <property type="match status" value="1"/>
</dbReference>